<proteinExistence type="inferred from homology"/>
<gene>
    <name evidence="2" type="primary">betI</name>
    <name type="ordered locus">Bcep18194_B0555</name>
</gene>
<dbReference type="EMBL" id="CP000152">
    <property type="protein sequence ID" value="ABB10669.1"/>
    <property type="molecule type" value="Genomic_DNA"/>
</dbReference>
<dbReference type="RefSeq" id="WP_011354164.1">
    <property type="nucleotide sequence ID" value="NC_007511.1"/>
</dbReference>
<dbReference type="SMR" id="Q39A42"/>
<dbReference type="GeneID" id="45096931"/>
<dbReference type="KEGG" id="bur:Bcep18194_B0555"/>
<dbReference type="PATRIC" id="fig|482957.22.peg.4158"/>
<dbReference type="HOGENOM" id="CLU_069356_15_4_4"/>
<dbReference type="UniPathway" id="UPA00529"/>
<dbReference type="Proteomes" id="UP000002705">
    <property type="component" value="Chromosome 2"/>
</dbReference>
<dbReference type="GO" id="GO:0003700">
    <property type="term" value="F:DNA-binding transcription factor activity"/>
    <property type="evidence" value="ECO:0007669"/>
    <property type="project" value="UniProtKB-UniRule"/>
</dbReference>
<dbReference type="GO" id="GO:0000976">
    <property type="term" value="F:transcription cis-regulatory region binding"/>
    <property type="evidence" value="ECO:0007669"/>
    <property type="project" value="TreeGrafter"/>
</dbReference>
<dbReference type="GO" id="GO:0019285">
    <property type="term" value="P:glycine betaine biosynthetic process from choline"/>
    <property type="evidence" value="ECO:0007669"/>
    <property type="project" value="UniProtKB-UniRule"/>
</dbReference>
<dbReference type="GO" id="GO:0045892">
    <property type="term" value="P:negative regulation of DNA-templated transcription"/>
    <property type="evidence" value="ECO:0007669"/>
    <property type="project" value="UniProtKB-UniRule"/>
</dbReference>
<dbReference type="Gene3D" id="1.10.357.10">
    <property type="entry name" value="Tetracycline Repressor, domain 2"/>
    <property type="match status" value="1"/>
</dbReference>
<dbReference type="HAMAP" id="MF_00768">
    <property type="entry name" value="HTH_type_BetI"/>
    <property type="match status" value="1"/>
</dbReference>
<dbReference type="InterPro" id="IPR039538">
    <property type="entry name" value="BetI_C"/>
</dbReference>
<dbReference type="InterPro" id="IPR023772">
    <property type="entry name" value="DNA-bd_HTH_TetR-type_CS"/>
</dbReference>
<dbReference type="InterPro" id="IPR009057">
    <property type="entry name" value="Homeodomain-like_sf"/>
</dbReference>
<dbReference type="InterPro" id="IPR050109">
    <property type="entry name" value="HTH-type_TetR-like_transc_reg"/>
</dbReference>
<dbReference type="InterPro" id="IPR001647">
    <property type="entry name" value="HTH_TetR"/>
</dbReference>
<dbReference type="InterPro" id="IPR036271">
    <property type="entry name" value="Tet_transcr_reg_TetR-rel_C_sf"/>
</dbReference>
<dbReference type="InterPro" id="IPR017757">
    <property type="entry name" value="Tscrpt_rep_BetI"/>
</dbReference>
<dbReference type="NCBIfam" id="TIGR03384">
    <property type="entry name" value="betaine_BetI"/>
    <property type="match status" value="1"/>
</dbReference>
<dbReference type="NCBIfam" id="NF001978">
    <property type="entry name" value="PRK00767.1"/>
    <property type="match status" value="1"/>
</dbReference>
<dbReference type="PANTHER" id="PTHR30055:SF234">
    <property type="entry name" value="HTH-TYPE TRANSCRIPTIONAL REGULATOR BETI"/>
    <property type="match status" value="1"/>
</dbReference>
<dbReference type="PANTHER" id="PTHR30055">
    <property type="entry name" value="HTH-TYPE TRANSCRIPTIONAL REGULATOR RUTR"/>
    <property type="match status" value="1"/>
</dbReference>
<dbReference type="Pfam" id="PF13977">
    <property type="entry name" value="TetR_C_6"/>
    <property type="match status" value="1"/>
</dbReference>
<dbReference type="Pfam" id="PF00440">
    <property type="entry name" value="TetR_N"/>
    <property type="match status" value="1"/>
</dbReference>
<dbReference type="SUPFAM" id="SSF46689">
    <property type="entry name" value="Homeodomain-like"/>
    <property type="match status" value="1"/>
</dbReference>
<dbReference type="SUPFAM" id="SSF48498">
    <property type="entry name" value="Tetracyclin repressor-like, C-terminal domain"/>
    <property type="match status" value="1"/>
</dbReference>
<dbReference type="PROSITE" id="PS01081">
    <property type="entry name" value="HTH_TETR_1"/>
    <property type="match status" value="1"/>
</dbReference>
<dbReference type="PROSITE" id="PS50977">
    <property type="entry name" value="HTH_TETR_2"/>
    <property type="match status" value="1"/>
</dbReference>
<sequence>MPKVGMREIRRAQLIDATLRSIDEAGLPGTTLASVAQRANISTGIVSHYFGDKDGLLEATMRHVLRDLWSATTHRRVAARKDPRSRLRAIVAANFDDTQVSAPVMKTWLAFWSQSMHDPMLKRLQHVNTRRLHSNLCAEFAKALPRTQAREAASGLAALIDGLWLRGALAGGPIDTRAALKLAHDYIDLLLASD</sequence>
<feature type="chain" id="PRO_0000257732" description="HTH-type transcriptional regulator BetI">
    <location>
        <begin position="1"/>
        <end position="194"/>
    </location>
</feature>
<feature type="domain" description="HTH tetR-type" evidence="2">
    <location>
        <begin position="8"/>
        <end position="68"/>
    </location>
</feature>
<feature type="DNA-binding region" description="H-T-H motif" evidence="2">
    <location>
        <begin position="31"/>
        <end position="50"/>
    </location>
</feature>
<protein>
    <recommendedName>
        <fullName evidence="2">HTH-type transcriptional regulator BetI</fullName>
    </recommendedName>
</protein>
<keyword id="KW-0238">DNA-binding</keyword>
<keyword id="KW-0678">Repressor</keyword>
<keyword id="KW-0804">Transcription</keyword>
<keyword id="KW-0805">Transcription regulation</keyword>
<organism>
    <name type="scientific">Burkholderia lata (strain ATCC 17760 / DSM 23089 / LMG 22485 / NCIMB 9086 / R18194 / 383)</name>
    <dbReference type="NCBI Taxonomy" id="482957"/>
    <lineage>
        <taxon>Bacteria</taxon>
        <taxon>Pseudomonadati</taxon>
        <taxon>Pseudomonadota</taxon>
        <taxon>Betaproteobacteria</taxon>
        <taxon>Burkholderiales</taxon>
        <taxon>Burkholderiaceae</taxon>
        <taxon>Burkholderia</taxon>
        <taxon>Burkholderia cepacia complex</taxon>
    </lineage>
</organism>
<comment type="function">
    <text evidence="1">Repressor involved in the biosynthesis of the osmoprotectant glycine betaine. It represses transcription of the choline transporter BetT and the genes of BetAB involved in the synthesis of glycine betaine (By similarity).</text>
</comment>
<comment type="pathway">
    <text>Amine and polyamine biosynthesis; betaine biosynthesis via choline pathway [regulation].</text>
</comment>
<name>BETI_BURL3</name>
<evidence type="ECO:0000250" key="1"/>
<evidence type="ECO:0000255" key="2">
    <source>
        <dbReference type="HAMAP-Rule" id="MF_00768"/>
    </source>
</evidence>
<accession>Q39A42</accession>
<reference key="1">
    <citation type="submission" date="2005-10" db="EMBL/GenBank/DDBJ databases">
        <title>Complete sequence of chromosome 2 of Burkholderia sp. 383.</title>
        <authorList>
            <consortium name="US DOE Joint Genome Institute"/>
            <person name="Copeland A."/>
            <person name="Lucas S."/>
            <person name="Lapidus A."/>
            <person name="Barry K."/>
            <person name="Detter J.C."/>
            <person name="Glavina T."/>
            <person name="Hammon N."/>
            <person name="Israni S."/>
            <person name="Pitluck S."/>
            <person name="Chain P."/>
            <person name="Malfatti S."/>
            <person name="Shin M."/>
            <person name="Vergez L."/>
            <person name="Schmutz J."/>
            <person name="Larimer F."/>
            <person name="Land M."/>
            <person name="Kyrpides N."/>
            <person name="Lykidis A."/>
            <person name="Richardson P."/>
        </authorList>
    </citation>
    <scope>NUCLEOTIDE SEQUENCE [LARGE SCALE GENOMIC DNA]</scope>
    <source>
        <strain>ATCC 17760 / DSM 23089 / LMG 22485 / NCIMB 9086 / R18194 / 383</strain>
    </source>
</reference>